<organism>
    <name type="scientific">Rattus norvegicus</name>
    <name type="common">Rat</name>
    <dbReference type="NCBI Taxonomy" id="10116"/>
    <lineage>
        <taxon>Eukaryota</taxon>
        <taxon>Metazoa</taxon>
        <taxon>Chordata</taxon>
        <taxon>Craniata</taxon>
        <taxon>Vertebrata</taxon>
        <taxon>Euteleostomi</taxon>
        <taxon>Mammalia</taxon>
        <taxon>Eutheria</taxon>
        <taxon>Euarchontoglires</taxon>
        <taxon>Glires</taxon>
        <taxon>Rodentia</taxon>
        <taxon>Myomorpha</taxon>
        <taxon>Muroidea</taxon>
        <taxon>Muridae</taxon>
        <taxon>Murinae</taxon>
        <taxon>Rattus</taxon>
    </lineage>
</organism>
<feature type="initiator methionine" description="Removed" evidence="3">
    <location>
        <position position="1"/>
    </location>
</feature>
<feature type="chain" id="PRO_0000088104" description="Tyrosine-protein kinase HCK">
    <location>
        <begin position="2"/>
        <end position="524"/>
    </location>
</feature>
<feature type="domain" description="SH3" evidence="6">
    <location>
        <begin position="76"/>
        <end position="136"/>
    </location>
</feature>
<feature type="domain" description="SH2" evidence="5">
    <location>
        <begin position="142"/>
        <end position="239"/>
    </location>
</feature>
<feature type="domain" description="Protein kinase" evidence="4">
    <location>
        <begin position="260"/>
        <end position="513"/>
    </location>
</feature>
<feature type="region of interest" description="Disordered" evidence="8">
    <location>
        <begin position="1"/>
        <end position="20"/>
    </location>
</feature>
<feature type="region of interest" description="Disordered" evidence="8">
    <location>
        <begin position="35"/>
        <end position="71"/>
    </location>
</feature>
<feature type="active site" description="Proton acceptor" evidence="4 7">
    <location>
        <position position="379"/>
    </location>
</feature>
<feature type="binding site" evidence="4">
    <location>
        <begin position="266"/>
        <end position="274"/>
    </location>
    <ligand>
        <name>ATP</name>
        <dbReference type="ChEBI" id="CHEBI:30616"/>
    </ligand>
</feature>
<feature type="binding site" evidence="4">
    <location>
        <position position="288"/>
    </location>
    <ligand>
        <name>ATP</name>
        <dbReference type="ChEBI" id="CHEBI:30616"/>
    </ligand>
</feature>
<feature type="modified residue" description="Phosphotyrosine; by autocatalysis" evidence="3">
    <location>
        <position position="50"/>
    </location>
</feature>
<feature type="modified residue" description="Phosphothreonine" evidence="3">
    <location>
        <position position="200"/>
    </location>
</feature>
<feature type="modified residue" description="Phosphotyrosine" evidence="2">
    <location>
        <position position="207"/>
    </location>
</feature>
<feature type="modified residue" description="Phosphotyrosine; by autocatalysis" evidence="3">
    <location>
        <position position="409"/>
    </location>
</feature>
<feature type="modified residue" description="Phosphoserine" evidence="3">
    <location>
        <position position="460"/>
    </location>
</feature>
<feature type="modified residue" description="Phosphotyrosine" evidence="3">
    <location>
        <position position="520"/>
    </location>
</feature>
<feature type="lipid moiety-binding region" description="N-myristoyl glycine" evidence="1">
    <location>
        <position position="2"/>
    </location>
</feature>
<feature type="splice variant" id="VSP_022248" description="In isoform 2." evidence="11 12 13">
    <location>
        <begin position="1"/>
        <end position="21"/>
    </location>
</feature>
<feature type="sequence conflict" description="In Ref. 1; AAA41312/AAB20754." evidence="14" ref="1">
    <original>V</original>
    <variation>F</variation>
    <location>
        <position position="72"/>
    </location>
</feature>
<feature type="sequence conflict" description="In Ref. 2; CAA44218." evidence="14" ref="2">
    <original>K</original>
    <variation>R</variation>
    <location>
        <position position="226"/>
    </location>
</feature>
<feature type="sequence conflict" description="In Ref. 2; CAA44218." evidence="14" ref="2">
    <original>I</original>
    <variation>T</variation>
    <location>
        <position position="327"/>
    </location>
</feature>
<feature type="initiator methionine" description="Removed" evidence="14">
    <location sequence="P50545-2">
        <position position="1"/>
    </location>
</feature>
<feature type="lipid moiety-binding region" description="N-myristoyl glycine" evidence="3">
    <location sequence="P50545-2">
        <position position="2"/>
    </location>
</feature>
<feature type="lipid moiety-binding region" description="S-palmitoyl cysteine" evidence="3">
    <location sequence="P50545-2">
        <position position="3"/>
    </location>
</feature>
<accession>P50545</accession>
<accession>Q64647</accession>
<accession>Q6AYV7</accession>
<proteinExistence type="evidence at protein level"/>
<protein>
    <recommendedName>
        <fullName>Tyrosine-protein kinase HCK</fullName>
        <ecNumber>2.7.10.2</ecNumber>
    </recommendedName>
    <alternativeName>
        <fullName>Hematopoietic cell kinase</fullName>
    </alternativeName>
    <alternativeName>
        <fullName>Hemopoietic cell kinase</fullName>
    </alternativeName>
    <alternativeName>
        <fullName>p56-HCK</fullName>
    </alternativeName>
    <alternativeName>
        <fullName>p56Hck</fullName>
    </alternativeName>
    <alternativeName>
        <fullName>p59Hck</fullName>
    </alternativeName>
</protein>
<name>HCK_RAT</name>
<evidence type="ECO:0000250" key="1"/>
<evidence type="ECO:0000250" key="2">
    <source>
        <dbReference type="UniProtKB" id="P08103"/>
    </source>
</evidence>
<evidence type="ECO:0000250" key="3">
    <source>
        <dbReference type="UniProtKB" id="P08631"/>
    </source>
</evidence>
<evidence type="ECO:0000255" key="4">
    <source>
        <dbReference type="PROSITE-ProRule" id="PRU00159"/>
    </source>
</evidence>
<evidence type="ECO:0000255" key="5">
    <source>
        <dbReference type="PROSITE-ProRule" id="PRU00191"/>
    </source>
</evidence>
<evidence type="ECO:0000255" key="6">
    <source>
        <dbReference type="PROSITE-ProRule" id="PRU00192"/>
    </source>
</evidence>
<evidence type="ECO:0000255" key="7">
    <source>
        <dbReference type="PROSITE-ProRule" id="PRU10028"/>
    </source>
</evidence>
<evidence type="ECO:0000256" key="8">
    <source>
        <dbReference type="SAM" id="MobiDB-lite"/>
    </source>
</evidence>
<evidence type="ECO:0000269" key="9">
    <source>
    </source>
</evidence>
<evidence type="ECO:0000269" key="10">
    <source ref="2"/>
</evidence>
<evidence type="ECO:0000303" key="11">
    <source>
    </source>
</evidence>
<evidence type="ECO:0000303" key="12">
    <source>
    </source>
</evidence>
<evidence type="ECO:0000303" key="13">
    <source ref="2"/>
</evidence>
<evidence type="ECO:0000305" key="14"/>
<gene>
    <name type="primary">Hck</name>
</gene>
<reference key="1">
    <citation type="journal article" date="1991" name="Biochem. Biophys. Res. Commun.">
        <title>Identification of rat cDNA encoding hck tyrosine kinase from megakaryocytes.</title>
        <authorList>
            <person name="Okano Y."/>
            <person name="Sugimoto Y."/>
            <person name="Fukuoka M."/>
            <person name="Matsui A."/>
            <person name="Nagata K."/>
            <person name="Nozawa Y."/>
        </authorList>
    </citation>
    <scope>NUCLEOTIDE SEQUENCE [MRNA] (ISOFORM 2)</scope>
    <source>
        <tissue>Megakaryocyte</tissue>
    </source>
</reference>
<reference key="2">
    <citation type="journal article" date="1994" name="J. Biosci.">
        <title>Nucleotide sequence of a cDNA coding for rat hck tyrosine kinase and characterization of its gene product.</title>
        <authorList>
            <person name="Vijaya Gouri B.S."/>
            <person name="Rema V."/>
            <person name="Kamatkar S."/>
            <person name="Swarup G."/>
        </authorList>
    </citation>
    <scope>NUCLEOTIDE SEQUENCE [MRNA] (ISOFORM 2)</scope>
    <scope>TISSUE SPECIFICITY</scope>
    <source>
        <strain>Wistar</strain>
        <tissue>Spleen</tissue>
    </source>
</reference>
<reference key="3">
    <citation type="journal article" date="2004" name="Genome Res.">
        <title>The status, quality, and expansion of the NIH full-length cDNA project: the Mammalian Gene Collection (MGC).</title>
        <authorList>
            <consortium name="The MGC Project Team"/>
        </authorList>
    </citation>
    <scope>NUCLEOTIDE SEQUENCE [LARGE SCALE MRNA] (ISOFORM 2)</scope>
    <source>
        <strain>Brown Norway</strain>
        <tissue>Lung</tissue>
    </source>
</reference>
<reference key="4">
    <citation type="journal article" date="2003" name="J. Biol. Chem.">
        <title>Physical and functional interaction between Hck tyrosine kinase and guanine nucleotide exchange factor C3G results in apoptosis, which is independent of C3G catalytic domain.</title>
        <authorList>
            <person name="Shivakrupa R."/>
            <person name="Radha V."/>
            <person name="Sudhakar C."/>
            <person name="Swarup G."/>
        </authorList>
    </citation>
    <scope>INTERACTION WITH RAPGEF1</scope>
    <scope>FUNCTION IN PHOSPHORYLATION OF RAPGEF1</scope>
</reference>
<reference key="5">
    <citation type="journal article" date="2012" name="Nat. Commun.">
        <title>Quantitative maps of protein phosphorylation sites across 14 different rat organs and tissues.</title>
        <authorList>
            <person name="Lundby A."/>
            <person name="Secher A."/>
            <person name="Lage K."/>
            <person name="Nordsborg N.B."/>
            <person name="Dmytriyev A."/>
            <person name="Lundby C."/>
            <person name="Olsen J.V."/>
        </authorList>
    </citation>
    <scope>IDENTIFICATION BY MASS SPECTROMETRY [LARGE SCALE ANALYSIS]</scope>
</reference>
<dbReference type="EC" id="2.7.10.2"/>
<dbReference type="EMBL" id="M83666">
    <property type="protein sequence ID" value="AAA41312.1"/>
    <property type="status" value="ALT_INIT"/>
    <property type="molecule type" value="mRNA"/>
</dbReference>
<dbReference type="EMBL" id="S74141">
    <property type="protein sequence ID" value="AAB20754.1"/>
    <property type="status" value="ALT_INIT"/>
    <property type="molecule type" value="mRNA"/>
</dbReference>
<dbReference type="EMBL" id="X62345">
    <property type="protein sequence ID" value="CAA44218.1"/>
    <property type="status" value="ALT_INIT"/>
    <property type="molecule type" value="mRNA"/>
</dbReference>
<dbReference type="EMBL" id="BC078890">
    <property type="protein sequence ID" value="AAH78890.2"/>
    <property type="molecule type" value="mRNA"/>
</dbReference>
<dbReference type="PIR" id="JQ1321">
    <property type="entry name" value="JQ1321"/>
</dbReference>
<dbReference type="RefSeq" id="NP_037317.2">
    <molecule id="P50545-1"/>
    <property type="nucleotide sequence ID" value="NM_013185.3"/>
</dbReference>
<dbReference type="SMR" id="P50545"/>
<dbReference type="FunCoup" id="P50545">
    <property type="interactions" value="328"/>
</dbReference>
<dbReference type="IntAct" id="P50545">
    <property type="interactions" value="2"/>
</dbReference>
<dbReference type="STRING" id="10116.ENSRNOP00000012432"/>
<dbReference type="iPTMnet" id="P50545"/>
<dbReference type="PhosphoSitePlus" id="P50545"/>
<dbReference type="jPOST" id="P50545"/>
<dbReference type="PaxDb" id="10116-ENSRNOP00000012432"/>
<dbReference type="GeneID" id="25734"/>
<dbReference type="KEGG" id="rno:25734"/>
<dbReference type="UCSC" id="RGD:2785">
    <molecule id="P50545-1"/>
    <property type="organism name" value="rat"/>
</dbReference>
<dbReference type="AGR" id="RGD:2785"/>
<dbReference type="CTD" id="3055"/>
<dbReference type="RGD" id="2785">
    <property type="gene designation" value="Hck"/>
</dbReference>
<dbReference type="VEuPathDB" id="HostDB:ENSRNOG00000009331"/>
<dbReference type="eggNOG" id="KOG0197">
    <property type="taxonomic scope" value="Eukaryota"/>
</dbReference>
<dbReference type="InParanoid" id="P50545"/>
<dbReference type="OrthoDB" id="5237at9989"/>
<dbReference type="PhylomeDB" id="P50545"/>
<dbReference type="BRENDA" id="2.7.10.2">
    <property type="organism ID" value="5301"/>
</dbReference>
<dbReference type="Reactome" id="R-RNO-2029481">
    <property type="pathway name" value="FCGR activation"/>
</dbReference>
<dbReference type="Reactome" id="R-RNO-912631">
    <property type="pathway name" value="Regulation of signaling by CBL"/>
</dbReference>
<dbReference type="Reactome" id="R-RNO-9674555">
    <property type="pathway name" value="Signaling by CSF3 (G-CSF)"/>
</dbReference>
<dbReference type="Reactome" id="R-RNO-9705462">
    <property type="pathway name" value="Inactivation of CSF3 (G-CSF) signaling"/>
</dbReference>
<dbReference type="PRO" id="PR:P50545"/>
<dbReference type="Proteomes" id="UP000002494">
    <property type="component" value="Chromosome 3"/>
</dbReference>
<dbReference type="Bgee" id="ENSRNOG00000009331">
    <property type="expression patterns" value="Expressed in spleen and 19 other cell types or tissues"/>
</dbReference>
<dbReference type="GO" id="GO:0005884">
    <property type="term" value="C:actin filament"/>
    <property type="evidence" value="ECO:0000266"/>
    <property type="project" value="RGD"/>
</dbReference>
<dbReference type="GO" id="GO:0005901">
    <property type="term" value="C:caveola"/>
    <property type="evidence" value="ECO:0000266"/>
    <property type="project" value="RGD"/>
</dbReference>
<dbReference type="GO" id="GO:0042995">
    <property type="term" value="C:cell projection"/>
    <property type="evidence" value="ECO:0007669"/>
    <property type="project" value="UniProtKB-SubCell"/>
</dbReference>
<dbReference type="GO" id="GO:0009898">
    <property type="term" value="C:cytoplasmic side of plasma membrane"/>
    <property type="evidence" value="ECO:0000250"/>
    <property type="project" value="UniProtKB"/>
</dbReference>
<dbReference type="GO" id="GO:0005829">
    <property type="term" value="C:cytosol"/>
    <property type="evidence" value="ECO:0007669"/>
    <property type="project" value="UniProtKB-SubCell"/>
</dbReference>
<dbReference type="GO" id="GO:0005925">
    <property type="term" value="C:focal adhesion"/>
    <property type="evidence" value="ECO:0000266"/>
    <property type="project" value="RGD"/>
</dbReference>
<dbReference type="GO" id="GO:0005794">
    <property type="term" value="C:Golgi apparatus"/>
    <property type="evidence" value="ECO:0007669"/>
    <property type="project" value="UniProtKB-SubCell"/>
</dbReference>
<dbReference type="GO" id="GO:0005764">
    <property type="term" value="C:lysosome"/>
    <property type="evidence" value="ECO:0000250"/>
    <property type="project" value="UniProtKB"/>
</dbReference>
<dbReference type="GO" id="GO:0005634">
    <property type="term" value="C:nucleus"/>
    <property type="evidence" value="ECO:0007669"/>
    <property type="project" value="UniProtKB-SubCell"/>
</dbReference>
<dbReference type="GO" id="GO:0005886">
    <property type="term" value="C:plasma membrane"/>
    <property type="evidence" value="ECO:0000318"/>
    <property type="project" value="GO_Central"/>
</dbReference>
<dbReference type="GO" id="GO:0030133">
    <property type="term" value="C:transport vesicle"/>
    <property type="evidence" value="ECO:0007669"/>
    <property type="project" value="UniProtKB-SubCell"/>
</dbReference>
<dbReference type="GO" id="GO:0005524">
    <property type="term" value="F:ATP binding"/>
    <property type="evidence" value="ECO:0007669"/>
    <property type="project" value="UniProtKB-KW"/>
</dbReference>
<dbReference type="GO" id="GO:0008289">
    <property type="term" value="F:lipid binding"/>
    <property type="evidence" value="ECO:0000266"/>
    <property type="project" value="RGD"/>
</dbReference>
<dbReference type="GO" id="GO:0004715">
    <property type="term" value="F:non-membrane spanning protein tyrosine kinase activity"/>
    <property type="evidence" value="ECO:0000318"/>
    <property type="project" value="GO_Central"/>
</dbReference>
<dbReference type="GO" id="GO:0001784">
    <property type="term" value="F:phosphotyrosine residue binding"/>
    <property type="evidence" value="ECO:0000266"/>
    <property type="project" value="RGD"/>
</dbReference>
<dbReference type="GO" id="GO:0004713">
    <property type="term" value="F:protein tyrosine kinase activity"/>
    <property type="evidence" value="ECO:0000250"/>
    <property type="project" value="UniProtKB"/>
</dbReference>
<dbReference type="GO" id="GO:0005102">
    <property type="term" value="F:signaling receptor binding"/>
    <property type="evidence" value="ECO:0000318"/>
    <property type="project" value="GO_Central"/>
</dbReference>
<dbReference type="GO" id="GO:0030154">
    <property type="term" value="P:cell differentiation"/>
    <property type="evidence" value="ECO:0000318"/>
    <property type="project" value="GO_Central"/>
</dbReference>
<dbReference type="GO" id="GO:0007169">
    <property type="term" value="P:cell surface receptor protein tyrosine kinase signaling pathway"/>
    <property type="evidence" value="ECO:0000318"/>
    <property type="project" value="GO_Central"/>
</dbReference>
<dbReference type="GO" id="GO:0050830">
    <property type="term" value="P:defense response to Gram-positive bacterium"/>
    <property type="evidence" value="ECO:0000266"/>
    <property type="project" value="RGD"/>
</dbReference>
<dbReference type="GO" id="GO:0006887">
    <property type="term" value="P:exocytosis"/>
    <property type="evidence" value="ECO:0007669"/>
    <property type="project" value="UniProtKB-KW"/>
</dbReference>
<dbReference type="GO" id="GO:0006954">
    <property type="term" value="P:inflammatory response"/>
    <property type="evidence" value="ECO:0007669"/>
    <property type="project" value="UniProtKB-KW"/>
</dbReference>
<dbReference type="GO" id="GO:0045087">
    <property type="term" value="P:innate immune response"/>
    <property type="evidence" value="ECO:0007669"/>
    <property type="project" value="UniProtKB-KW"/>
</dbReference>
<dbReference type="GO" id="GO:0035556">
    <property type="term" value="P:intracellular signal transduction"/>
    <property type="evidence" value="ECO:0000266"/>
    <property type="project" value="RGD"/>
</dbReference>
<dbReference type="GO" id="GO:0043066">
    <property type="term" value="P:negative regulation of apoptotic process"/>
    <property type="evidence" value="ECO:0000266"/>
    <property type="project" value="RGD"/>
</dbReference>
<dbReference type="GO" id="GO:0018108">
    <property type="term" value="P:peptidyl-tyrosine phosphorylation"/>
    <property type="evidence" value="ECO:0000250"/>
    <property type="project" value="UniProtKB"/>
</dbReference>
<dbReference type="GO" id="GO:0006909">
    <property type="term" value="P:phagocytosis"/>
    <property type="evidence" value="ECO:0000266"/>
    <property type="project" value="RGD"/>
</dbReference>
<dbReference type="GO" id="GO:0008284">
    <property type="term" value="P:positive regulation of cell population proliferation"/>
    <property type="evidence" value="ECO:0000250"/>
    <property type="project" value="UniProtKB"/>
</dbReference>
<dbReference type="GO" id="GO:0046777">
    <property type="term" value="P:protein autophosphorylation"/>
    <property type="evidence" value="ECO:0000250"/>
    <property type="project" value="UniProtKB"/>
</dbReference>
<dbReference type="GO" id="GO:0032956">
    <property type="term" value="P:regulation of actin cytoskeleton organization"/>
    <property type="evidence" value="ECO:0000250"/>
    <property type="project" value="UniProtKB"/>
</dbReference>
<dbReference type="GO" id="GO:0008360">
    <property type="term" value="P:regulation of cell shape"/>
    <property type="evidence" value="ECO:0000250"/>
    <property type="project" value="UniProtKB"/>
</dbReference>
<dbReference type="GO" id="GO:0050764">
    <property type="term" value="P:regulation of phagocytosis"/>
    <property type="evidence" value="ECO:0000250"/>
    <property type="project" value="UniProtKB"/>
</dbReference>
<dbReference type="GO" id="GO:0071801">
    <property type="term" value="P:regulation of podosome assembly"/>
    <property type="evidence" value="ECO:0000250"/>
    <property type="project" value="UniProtKB"/>
</dbReference>
<dbReference type="CDD" id="cd10363">
    <property type="entry name" value="SH2_Src_HCK"/>
    <property type="match status" value="1"/>
</dbReference>
<dbReference type="FunFam" id="1.10.510.10:FF:000553">
    <property type="entry name" value="Tyrosine-protein kinase"/>
    <property type="match status" value="1"/>
</dbReference>
<dbReference type="FunFam" id="2.30.30.40:FF:000095">
    <property type="entry name" value="Tyrosine-protein kinase"/>
    <property type="match status" value="1"/>
</dbReference>
<dbReference type="FunFam" id="3.30.200.20:FF:000036">
    <property type="entry name" value="Tyrosine-protein kinase"/>
    <property type="match status" value="1"/>
</dbReference>
<dbReference type="FunFam" id="3.30.505.10:FF:000010">
    <property type="entry name" value="Tyrosine-protein kinase"/>
    <property type="match status" value="1"/>
</dbReference>
<dbReference type="Gene3D" id="3.30.200.20">
    <property type="entry name" value="Phosphorylase Kinase, domain 1"/>
    <property type="match status" value="1"/>
</dbReference>
<dbReference type="Gene3D" id="3.30.505.10">
    <property type="entry name" value="SH2 domain"/>
    <property type="match status" value="1"/>
</dbReference>
<dbReference type="Gene3D" id="2.30.30.40">
    <property type="entry name" value="SH3 Domains"/>
    <property type="match status" value="1"/>
</dbReference>
<dbReference type="Gene3D" id="1.10.510.10">
    <property type="entry name" value="Transferase(Phosphotransferase) domain 1"/>
    <property type="match status" value="1"/>
</dbReference>
<dbReference type="InterPro" id="IPR035851">
    <property type="entry name" value="HCK_SH2"/>
</dbReference>
<dbReference type="InterPro" id="IPR011009">
    <property type="entry name" value="Kinase-like_dom_sf"/>
</dbReference>
<dbReference type="InterPro" id="IPR050198">
    <property type="entry name" value="Non-receptor_tyrosine_kinases"/>
</dbReference>
<dbReference type="InterPro" id="IPR000719">
    <property type="entry name" value="Prot_kinase_dom"/>
</dbReference>
<dbReference type="InterPro" id="IPR017441">
    <property type="entry name" value="Protein_kinase_ATP_BS"/>
</dbReference>
<dbReference type="InterPro" id="IPR001245">
    <property type="entry name" value="Ser-Thr/Tyr_kinase_cat_dom"/>
</dbReference>
<dbReference type="InterPro" id="IPR000980">
    <property type="entry name" value="SH2"/>
</dbReference>
<dbReference type="InterPro" id="IPR036860">
    <property type="entry name" value="SH2_dom_sf"/>
</dbReference>
<dbReference type="InterPro" id="IPR036028">
    <property type="entry name" value="SH3-like_dom_sf"/>
</dbReference>
<dbReference type="InterPro" id="IPR001452">
    <property type="entry name" value="SH3_domain"/>
</dbReference>
<dbReference type="InterPro" id="IPR008266">
    <property type="entry name" value="Tyr_kinase_AS"/>
</dbReference>
<dbReference type="InterPro" id="IPR020635">
    <property type="entry name" value="Tyr_kinase_cat_dom"/>
</dbReference>
<dbReference type="PANTHER" id="PTHR24418">
    <property type="entry name" value="TYROSINE-PROTEIN KINASE"/>
    <property type="match status" value="1"/>
</dbReference>
<dbReference type="Pfam" id="PF07714">
    <property type="entry name" value="PK_Tyr_Ser-Thr"/>
    <property type="match status" value="1"/>
</dbReference>
<dbReference type="Pfam" id="PF00017">
    <property type="entry name" value="SH2"/>
    <property type="match status" value="1"/>
</dbReference>
<dbReference type="Pfam" id="PF00018">
    <property type="entry name" value="SH3_1"/>
    <property type="match status" value="1"/>
</dbReference>
<dbReference type="PRINTS" id="PR00401">
    <property type="entry name" value="SH2DOMAIN"/>
</dbReference>
<dbReference type="PRINTS" id="PR00452">
    <property type="entry name" value="SH3DOMAIN"/>
</dbReference>
<dbReference type="PRINTS" id="PR00109">
    <property type="entry name" value="TYRKINASE"/>
</dbReference>
<dbReference type="SMART" id="SM00252">
    <property type="entry name" value="SH2"/>
    <property type="match status" value="1"/>
</dbReference>
<dbReference type="SMART" id="SM00326">
    <property type="entry name" value="SH3"/>
    <property type="match status" value="1"/>
</dbReference>
<dbReference type="SMART" id="SM00219">
    <property type="entry name" value="TyrKc"/>
    <property type="match status" value="1"/>
</dbReference>
<dbReference type="SUPFAM" id="SSF56112">
    <property type="entry name" value="Protein kinase-like (PK-like)"/>
    <property type="match status" value="1"/>
</dbReference>
<dbReference type="SUPFAM" id="SSF55550">
    <property type="entry name" value="SH2 domain"/>
    <property type="match status" value="1"/>
</dbReference>
<dbReference type="SUPFAM" id="SSF50044">
    <property type="entry name" value="SH3-domain"/>
    <property type="match status" value="1"/>
</dbReference>
<dbReference type="PROSITE" id="PS00107">
    <property type="entry name" value="PROTEIN_KINASE_ATP"/>
    <property type="match status" value="1"/>
</dbReference>
<dbReference type="PROSITE" id="PS50011">
    <property type="entry name" value="PROTEIN_KINASE_DOM"/>
    <property type="match status" value="1"/>
</dbReference>
<dbReference type="PROSITE" id="PS00109">
    <property type="entry name" value="PROTEIN_KINASE_TYR"/>
    <property type="match status" value="1"/>
</dbReference>
<dbReference type="PROSITE" id="PS50001">
    <property type="entry name" value="SH2"/>
    <property type="match status" value="1"/>
</dbReference>
<dbReference type="PROSITE" id="PS50002">
    <property type="entry name" value="SH3"/>
    <property type="match status" value="1"/>
</dbReference>
<keyword id="KW-0024">Alternative initiation</keyword>
<keyword id="KW-0067">ATP-binding</keyword>
<keyword id="KW-0965">Cell junction</keyword>
<keyword id="KW-1003">Cell membrane</keyword>
<keyword id="KW-0966">Cell projection</keyword>
<keyword id="KW-0963">Cytoplasm</keyword>
<keyword id="KW-0968">Cytoplasmic vesicle</keyword>
<keyword id="KW-0206">Cytoskeleton</keyword>
<keyword id="KW-0268">Exocytosis</keyword>
<keyword id="KW-0333">Golgi apparatus</keyword>
<keyword id="KW-0391">Immunity</keyword>
<keyword id="KW-0395">Inflammatory response</keyword>
<keyword id="KW-0399">Innate immunity</keyword>
<keyword id="KW-0418">Kinase</keyword>
<keyword id="KW-0449">Lipoprotein</keyword>
<keyword id="KW-0458">Lysosome</keyword>
<keyword id="KW-0472">Membrane</keyword>
<keyword id="KW-0519">Myristate</keyword>
<keyword id="KW-0547">Nucleotide-binding</keyword>
<keyword id="KW-0539">Nucleus</keyword>
<keyword id="KW-0564">Palmitate</keyword>
<keyword id="KW-0581">Phagocytosis</keyword>
<keyword id="KW-0597">Phosphoprotein</keyword>
<keyword id="KW-0656">Proto-oncogene</keyword>
<keyword id="KW-1185">Reference proteome</keyword>
<keyword id="KW-0727">SH2 domain</keyword>
<keyword id="KW-0728">SH3 domain</keyword>
<keyword id="KW-0808">Transferase</keyword>
<keyword id="KW-0829">Tyrosine-protein kinase</keyword>
<keyword id="KW-0832">Ubl conjugation</keyword>
<comment type="function">
    <text evidence="1 9">Non-receptor tyrosine-protein kinase found in hematopoietic cells that transmits signals from cell surface receptors and plays an important role in the regulation of innate immune responses, including neutrophil, monocyte, macrophage and mast cell functions, phagocytosis, cell survival and proliferation, cell adhesion and migration. Acts downstream of receptors that bind the Fc region of immunoglobulins, such as FCGR1A and FCGR2A, but also CSF3R, PLAUR, the receptors for IFNG, IL2, IL6 and IL8, and integrins, such as ITGB1 and ITGB2. During the phagocytic process, mediates mobilization of secretory lysosomes, degranulation, and activation of NADPH oxidase to bring about the respiratory burst. Plays a role in the release of inflammatory molecules. Promotes reorganization of the actin cytoskeleton and actin polymerization, formation of podosomes and cell protrusions. Inhibits TP73-mediated transcription activation and TP73-mediated apoptosis. Phosphorylates CBL in response to activation of immunoglobulin gamma Fc region receptors. Phosphorylates ADAM15, BCR, ELMO1, FCGR2A, GAB1, GAB2, RAPGEF1, STAT5B, TP73, VAV1 and WAS (By similarity).</text>
</comment>
<comment type="catalytic activity">
    <reaction evidence="7">
        <text>L-tyrosyl-[protein] + ATP = O-phospho-L-tyrosyl-[protein] + ADP + H(+)</text>
        <dbReference type="Rhea" id="RHEA:10596"/>
        <dbReference type="Rhea" id="RHEA-COMP:10136"/>
        <dbReference type="Rhea" id="RHEA-COMP:20101"/>
        <dbReference type="ChEBI" id="CHEBI:15378"/>
        <dbReference type="ChEBI" id="CHEBI:30616"/>
        <dbReference type="ChEBI" id="CHEBI:46858"/>
        <dbReference type="ChEBI" id="CHEBI:61978"/>
        <dbReference type="ChEBI" id="CHEBI:456216"/>
        <dbReference type="EC" id="2.7.10.2"/>
    </reaction>
</comment>
<comment type="activity regulation">
    <text evidence="1">Subject to autoinhibition, mediated by intramolecular interactions involving the SH2 and SH3 domains. Kinase activity is also regulated by phosphorylation at regulatory tyrosine residues. Phosphorylation at Tyr-409 is required for optimal activity. Phosphorylation at Tyr-520 inhibits kinase activity (By similarity).</text>
</comment>
<comment type="subunit">
    <text evidence="2 3">Interacts with ADAM15. Interacts with FASLG. Interacts with ARRB1 and ARRB2. Interacts with FCGR1A; the interaction may be indirect. Interacts with IL6ST. Interacts (via SH3 domain) with ELMO1. Interacts (via SH3 domain) with TP73. Interacts with YAP1. Interacts with ABL1 and ITGB1, and thereby recruits ABL1 to activated ITGB1. Interacts (via SH2 domain) with FLT3 (tyrosine phosphorylated). Interacts with CBL. Interacts with VAV1, WAS and RAPGEF1. Interacts (via SH3 domain) with WDCP.</text>
</comment>
<comment type="subcellular location">
    <subcellularLocation>
        <location evidence="1">Cytoplasmic vesicle</location>
        <location evidence="1">Secretory vesicle</location>
    </subcellularLocation>
    <subcellularLocation>
        <location evidence="1">Cytoplasm</location>
        <location evidence="1">Cytosol</location>
    </subcellularLocation>
</comment>
<comment type="subcellular location">
    <molecule>Isoform 1</molecule>
    <subcellularLocation>
        <location>Membrane</location>
        <topology>Lipid-anchor</topology>
    </subcellularLocation>
    <subcellularLocation>
        <location evidence="1">Membrane</location>
        <location evidence="1">Caveola</location>
    </subcellularLocation>
    <subcellularLocation>
        <location evidence="1">Lysosome</location>
    </subcellularLocation>
    <subcellularLocation>
        <location evidence="1">Cell projection</location>
        <location evidence="1">Podosome membrane</location>
        <topology evidence="1">Lipid-anchor</topology>
    </subcellularLocation>
    <subcellularLocation>
        <location evidence="1">Cytoplasm</location>
        <location evidence="1">Cytosol</location>
    </subcellularLocation>
    <text evidence="1">Associated with specialized secretory lysosomes called azurophil granules. A fraction of this isoform is found in the cytoplasm, some of this fraction is myristoylated (By similarity).</text>
</comment>
<comment type="subcellular location">
    <molecule>Isoform 2</molecule>
    <subcellularLocation>
        <location>Cell membrane</location>
        <topology>Lipid-anchor</topology>
    </subcellularLocation>
    <subcellularLocation>
        <location evidence="1">Membrane</location>
        <location evidence="1">Caveola</location>
        <topology evidence="1">Lipid-anchor</topology>
    </subcellularLocation>
    <subcellularLocation>
        <location evidence="1">Cell junction</location>
        <location evidence="1">Focal adhesion</location>
    </subcellularLocation>
    <subcellularLocation>
        <location evidence="1">Cytoplasm</location>
        <location evidence="1">Cytoskeleton</location>
    </subcellularLocation>
    <subcellularLocation>
        <location evidence="1">Golgi apparatus</location>
    </subcellularLocation>
    <subcellularLocation>
        <location evidence="1">Cytoplasmic vesicle</location>
    </subcellularLocation>
    <subcellularLocation>
        <location evidence="1">Lysosome</location>
    </subcellularLocation>
    <subcellularLocation>
        <location evidence="1">Nucleus</location>
    </subcellularLocation>
    <text evidence="1">A small fraction of this isoform is associated with caveolae. Localization at the cell membrane and at caveolae requires palmitoylation at Cys-3. Colocalizes with the actin cytoskeleton at focal adhesions (By similarity).</text>
</comment>
<comment type="alternative products">
    <event type="alternative initiation"/>
    <isoform>
        <id>P50545-1</id>
        <name>1</name>
        <name>p59-HCK</name>
        <sequence type="displayed"/>
    </isoform>
    <isoform>
        <id>P50545-2</id>
        <name>2</name>
        <name>p56-HCK</name>
        <sequence type="described" ref="VSP_022248"/>
    </isoform>
</comment>
<comment type="tissue specificity">
    <text evidence="10">Expressed strongly in spleen and at very low levels in thymus.</text>
</comment>
<comment type="PTM">
    <text evidence="1">Phosphorylated on several tyrosine residues. Autophosphorylated. Becomes rapidly phosphorylated upon activation of the immunoglobulin receptors FCGR1A and FCGR2A. Phosphorylation at Tyr-409 increases kinase activity. Phosphorylation at Tyr-520 inhibits kinase activity. Kinase activity is not required for phosphorylation at Tyr-520, suggesting that this site may be a target of other kinases (By similarity).</text>
</comment>
<comment type="PTM">
    <text evidence="1">Ubiquitinated by CBL, leading to its degradation via the proteasome.</text>
</comment>
<comment type="PTM">
    <text evidence="3">Isoform 2 palmitoylation at position 2 requires prior myristoylation. Palmitoylation at position 3 is required for caveolar localization of isoform 2.</text>
</comment>
<comment type="similarity">
    <text evidence="4">Belongs to the protein kinase superfamily. Tyr protein kinase family. SRC subfamily.</text>
</comment>
<comment type="sequence caution" evidence="14">
    <conflict type="erroneous initiation">
        <sequence resource="EMBL-CDS" id="AAA41312"/>
    </conflict>
    <text>Truncated N-terminus.</text>
</comment>
<comment type="sequence caution" evidence="14">
    <conflict type="erroneous initiation">
        <sequence resource="EMBL-CDS" id="AAB20754"/>
    </conflict>
    <text>Truncated N-terminus.</text>
</comment>
<comment type="sequence caution" evidence="14">
    <conflict type="erroneous initiation">
        <sequence resource="EMBL-CDS" id="CAA44218"/>
    </conflict>
    <text>Truncated N-terminus.</text>
</comment>
<sequence>MGGRSSCEDPGCPRGEGRVPRMGCVKSRFLREGSKASKIEPNANQKGPVYVPDPTSPKKLGPNSINSLPPGVVEGSEDTIVVALYDYEAIHREDLSFQKGDQMVVLEESGEWWKARSLATKKEGYIPSNYVARVNSLETEEWFFKGISRKDAERHLLAPGNMLGSFMIRDSETTKGSYSLSVRDFDPQHGDTVKHYKIRTLDSGGFYISPRSTFSSLQELVVHYKKGKDGLCQKLSVPCVSPKPQKPWEKDAWEIPRESLQMEKKLGAGQFGEVWMATYNKHTKVAVKTMKPGSMSVEAFLAEANLMKTLQHDKLVKLHAVVSQEPIFIVTEFMAKGSLLDFLKSEEGSKQPLPKLIDFSAQISEGMAFIEQRNYIHRDLRAANILVSASLVCKIADFGLARIIEDNEYTAREGAKFPIKWTAPEAINFGSFTIKSDVWSFGILLMEIVTYGRIPYPGMSNPEVIRALEHGYRMPRPDNCPEELYSIMIRCWKNRPEERPTFEYIQSVLDDFYTATESQYQQQP</sequence>